<accession>P44602</accession>
<reference key="1">
    <citation type="journal article" date="1995" name="Science">
        <title>Whole-genome random sequencing and assembly of Haemophilus influenzae Rd.</title>
        <authorList>
            <person name="Fleischmann R.D."/>
            <person name="Adams M.D."/>
            <person name="White O."/>
            <person name="Clayton R.A."/>
            <person name="Kirkness E.F."/>
            <person name="Kerlavage A.R."/>
            <person name="Bult C.J."/>
            <person name="Tomb J.-F."/>
            <person name="Dougherty B.A."/>
            <person name="Merrick J.M."/>
            <person name="McKenney K."/>
            <person name="Sutton G.G."/>
            <person name="FitzHugh W."/>
            <person name="Fields C.A."/>
            <person name="Gocayne J.D."/>
            <person name="Scott J.D."/>
            <person name="Shirley R."/>
            <person name="Liu L.-I."/>
            <person name="Glodek A."/>
            <person name="Kelley J.M."/>
            <person name="Weidman J.F."/>
            <person name="Phillips C.A."/>
            <person name="Spriggs T."/>
            <person name="Hedblom E."/>
            <person name="Cotton M.D."/>
            <person name="Utterback T.R."/>
            <person name="Hanna M.C."/>
            <person name="Nguyen D.T."/>
            <person name="Saudek D.M."/>
            <person name="Brandon R.C."/>
            <person name="Fine L.D."/>
            <person name="Fritchman J.L."/>
            <person name="Fuhrmann J.L."/>
            <person name="Geoghagen N.S.M."/>
            <person name="Gnehm C.L."/>
            <person name="McDonald L.A."/>
            <person name="Small K.V."/>
            <person name="Fraser C.M."/>
            <person name="Smith H.O."/>
            <person name="Venter J.C."/>
        </authorList>
    </citation>
    <scope>NUCLEOTIDE SEQUENCE [LARGE SCALE GENOMIC DNA]</scope>
    <source>
        <strain>ATCC 51907 / DSM 11121 / KW20 / Rd</strain>
    </source>
</reference>
<name>HXUA1_HAEIN</name>
<evidence type="ECO:0000250" key="1"/>
<evidence type="ECO:0007829" key="2">
    <source>
        <dbReference type="PDB" id="4I84"/>
    </source>
</evidence>
<evidence type="ECO:0007829" key="3">
    <source>
        <dbReference type="PDB" id="4RM6"/>
    </source>
</evidence>
<evidence type="ECO:0007829" key="4">
    <source>
        <dbReference type="PDB" id="4RT6"/>
    </source>
</evidence>
<gene>
    <name type="primary">hxuA</name>
    <name type="ordered locus">HI_0264</name>
</gene>
<keyword id="KW-0002">3D-structure</keyword>
<keyword id="KW-1185">Reference proteome</keyword>
<keyword id="KW-0677">Repeat</keyword>
<keyword id="KW-0964">Secreted</keyword>
<keyword id="KW-0732">Signal</keyword>
<keyword id="KW-0813">Transport</keyword>
<proteinExistence type="evidence at protein level"/>
<feature type="signal peptide" evidence="1">
    <location>
        <begin position="1"/>
        <end position="21"/>
    </location>
</feature>
<feature type="chain" id="PRO_0000021467" description="Heme/hemopexin-binding protein">
    <location>
        <begin position="22"/>
        <end position="905"/>
    </location>
</feature>
<feature type="strand" evidence="2">
    <location>
        <begin position="28"/>
        <end position="35"/>
    </location>
</feature>
<feature type="strand" evidence="2">
    <location>
        <begin position="37"/>
        <end position="42"/>
    </location>
</feature>
<feature type="strand" evidence="2">
    <location>
        <begin position="45"/>
        <end position="50"/>
    </location>
</feature>
<feature type="strand" evidence="2">
    <location>
        <begin position="52"/>
        <end position="61"/>
    </location>
</feature>
<feature type="strand" evidence="2">
    <location>
        <begin position="69"/>
        <end position="73"/>
    </location>
</feature>
<feature type="strand" evidence="2">
    <location>
        <begin position="80"/>
        <end position="85"/>
    </location>
</feature>
<feature type="strand" evidence="2">
    <location>
        <begin position="87"/>
        <end position="89"/>
    </location>
</feature>
<feature type="strand" evidence="2">
    <location>
        <begin position="91"/>
        <end position="93"/>
    </location>
</feature>
<feature type="strand" evidence="2">
    <location>
        <begin position="95"/>
        <end position="106"/>
    </location>
</feature>
<feature type="strand" evidence="2">
    <location>
        <begin position="111"/>
        <end position="113"/>
    </location>
</feature>
<feature type="strand" evidence="2">
    <location>
        <begin position="118"/>
        <end position="120"/>
    </location>
</feature>
<feature type="strand" evidence="2">
    <location>
        <begin position="122"/>
        <end position="130"/>
    </location>
</feature>
<feature type="strand" evidence="2">
    <location>
        <begin position="136"/>
        <end position="138"/>
    </location>
</feature>
<feature type="strand" evidence="2">
    <location>
        <begin position="144"/>
        <end position="146"/>
    </location>
</feature>
<feature type="strand" evidence="2">
    <location>
        <begin position="159"/>
        <end position="162"/>
    </location>
</feature>
<feature type="strand" evidence="2">
    <location>
        <begin position="164"/>
        <end position="167"/>
    </location>
</feature>
<feature type="strand" evidence="2">
    <location>
        <begin position="169"/>
        <end position="181"/>
    </location>
</feature>
<feature type="strand" evidence="2">
    <location>
        <begin position="183"/>
        <end position="186"/>
    </location>
</feature>
<feature type="strand" evidence="2">
    <location>
        <begin position="192"/>
        <end position="203"/>
    </location>
</feature>
<feature type="strand" evidence="2">
    <location>
        <begin position="208"/>
        <end position="212"/>
    </location>
</feature>
<feature type="helix" evidence="2">
    <location>
        <begin position="214"/>
        <end position="216"/>
    </location>
</feature>
<feature type="strand" evidence="2">
    <location>
        <begin position="222"/>
        <end position="225"/>
    </location>
</feature>
<feature type="strand" evidence="2">
    <location>
        <begin position="227"/>
        <end position="238"/>
    </location>
</feature>
<feature type="strand" evidence="2">
    <location>
        <begin position="242"/>
        <end position="245"/>
    </location>
</feature>
<feature type="strand" evidence="2">
    <location>
        <begin position="248"/>
        <end position="251"/>
    </location>
</feature>
<feature type="strand" evidence="2">
    <location>
        <begin position="253"/>
        <end position="257"/>
    </location>
</feature>
<feature type="strand" evidence="2">
    <location>
        <begin position="266"/>
        <end position="276"/>
    </location>
</feature>
<feature type="strand" evidence="2">
    <location>
        <begin position="281"/>
        <end position="291"/>
    </location>
</feature>
<feature type="strand" evidence="2">
    <location>
        <begin position="298"/>
        <end position="302"/>
    </location>
</feature>
<feature type="strand" evidence="2">
    <location>
        <begin position="307"/>
        <end position="323"/>
    </location>
</feature>
<feature type="turn" evidence="3">
    <location>
        <begin position="337"/>
        <end position="340"/>
    </location>
</feature>
<feature type="strand" evidence="3">
    <location>
        <begin position="345"/>
        <end position="349"/>
    </location>
</feature>
<feature type="strand" evidence="3">
    <location>
        <begin position="356"/>
        <end position="361"/>
    </location>
</feature>
<feature type="strand" evidence="4">
    <location>
        <begin position="366"/>
        <end position="369"/>
    </location>
</feature>
<feature type="strand" evidence="3">
    <location>
        <begin position="372"/>
        <end position="375"/>
    </location>
</feature>
<feature type="helix" evidence="3">
    <location>
        <begin position="376"/>
        <end position="385"/>
    </location>
</feature>
<feature type="strand" evidence="3">
    <location>
        <begin position="386"/>
        <end position="391"/>
    </location>
</feature>
<feature type="strand" evidence="3">
    <location>
        <begin position="396"/>
        <end position="404"/>
    </location>
</feature>
<feature type="helix" evidence="3">
    <location>
        <begin position="407"/>
        <end position="409"/>
    </location>
</feature>
<feature type="strand" evidence="3">
    <location>
        <begin position="412"/>
        <end position="416"/>
    </location>
</feature>
<feature type="strand" evidence="3">
    <location>
        <begin position="422"/>
        <end position="433"/>
    </location>
</feature>
<feature type="strand" evidence="3">
    <location>
        <begin position="435"/>
        <end position="438"/>
    </location>
</feature>
<feature type="strand" evidence="4">
    <location>
        <begin position="443"/>
        <end position="445"/>
    </location>
</feature>
<feature type="strand" evidence="3">
    <location>
        <begin position="451"/>
        <end position="468"/>
    </location>
</feature>
<feature type="helix" evidence="3">
    <location>
        <begin position="473"/>
        <end position="475"/>
    </location>
</feature>
<feature type="strand" evidence="3">
    <location>
        <begin position="479"/>
        <end position="481"/>
    </location>
</feature>
<feature type="strand" evidence="3">
    <location>
        <begin position="484"/>
        <end position="487"/>
    </location>
</feature>
<feature type="strand" evidence="3">
    <location>
        <begin position="492"/>
        <end position="523"/>
    </location>
</feature>
<feature type="strand" evidence="3">
    <location>
        <begin position="528"/>
        <end position="532"/>
    </location>
</feature>
<feature type="strand" evidence="3">
    <location>
        <begin position="535"/>
        <end position="540"/>
    </location>
</feature>
<feature type="helix" evidence="3">
    <location>
        <begin position="549"/>
        <end position="553"/>
    </location>
</feature>
<feature type="helix" evidence="3">
    <location>
        <begin position="571"/>
        <end position="578"/>
    </location>
</feature>
<feature type="helix" evidence="3">
    <location>
        <begin position="580"/>
        <end position="582"/>
    </location>
</feature>
<feature type="turn" evidence="4">
    <location>
        <begin position="589"/>
        <end position="591"/>
    </location>
</feature>
<feature type="strand" evidence="4">
    <location>
        <begin position="593"/>
        <end position="595"/>
    </location>
</feature>
<feature type="strand" evidence="3">
    <location>
        <begin position="600"/>
        <end position="605"/>
    </location>
</feature>
<feature type="strand" evidence="3">
    <location>
        <begin position="607"/>
        <end position="612"/>
    </location>
</feature>
<feature type="strand" evidence="3">
    <location>
        <begin position="614"/>
        <end position="626"/>
    </location>
</feature>
<feature type="strand" evidence="3">
    <location>
        <begin position="628"/>
        <end position="633"/>
    </location>
</feature>
<feature type="helix" evidence="3">
    <location>
        <begin position="641"/>
        <end position="643"/>
    </location>
</feature>
<feature type="strand" evidence="3">
    <location>
        <begin position="647"/>
        <end position="658"/>
    </location>
</feature>
<feature type="strand" evidence="3">
    <location>
        <begin position="660"/>
        <end position="665"/>
    </location>
</feature>
<feature type="strand" evidence="3">
    <location>
        <begin position="677"/>
        <end position="705"/>
    </location>
</feature>
<feature type="strand" evidence="3">
    <location>
        <begin position="710"/>
        <end position="716"/>
    </location>
</feature>
<feature type="helix" evidence="3">
    <location>
        <begin position="717"/>
        <end position="719"/>
    </location>
</feature>
<feature type="strand" evidence="3">
    <location>
        <begin position="720"/>
        <end position="726"/>
    </location>
</feature>
<feature type="strand" evidence="4">
    <location>
        <begin position="734"/>
        <end position="737"/>
    </location>
</feature>
<feature type="strand" evidence="4">
    <location>
        <begin position="740"/>
        <end position="743"/>
    </location>
</feature>
<feature type="turn" evidence="4">
    <location>
        <begin position="744"/>
        <end position="751"/>
    </location>
</feature>
<feature type="strand" evidence="3">
    <location>
        <begin position="753"/>
        <end position="757"/>
    </location>
</feature>
<feature type="strand" evidence="3">
    <location>
        <begin position="761"/>
        <end position="769"/>
    </location>
</feature>
<feature type="strand" evidence="3">
    <location>
        <begin position="771"/>
        <end position="775"/>
    </location>
</feature>
<feature type="strand" evidence="3">
    <location>
        <begin position="781"/>
        <end position="785"/>
    </location>
</feature>
<feature type="strand" evidence="3">
    <location>
        <begin position="789"/>
        <end position="793"/>
    </location>
</feature>
<feature type="strand" evidence="3">
    <location>
        <begin position="797"/>
        <end position="802"/>
    </location>
</feature>
<feature type="helix" evidence="3">
    <location>
        <begin position="824"/>
        <end position="834"/>
    </location>
</feature>
<dbReference type="EMBL" id="L42023">
    <property type="protein sequence ID" value="AAC21929.1"/>
    <property type="molecule type" value="Genomic_DNA"/>
</dbReference>
<dbReference type="PIR" id="E64058">
    <property type="entry name" value="E64058"/>
</dbReference>
<dbReference type="RefSeq" id="NP_438433.1">
    <property type="nucleotide sequence ID" value="NC_000907.1"/>
</dbReference>
<dbReference type="PDB" id="4I84">
    <property type="method" value="X-ray"/>
    <property type="resolution" value="1.50 A"/>
    <property type="chains" value="A/B=24-324"/>
</dbReference>
<dbReference type="PDB" id="4RM6">
    <property type="method" value="X-ray"/>
    <property type="resolution" value="1.60 A"/>
    <property type="chains" value="A=22-905"/>
</dbReference>
<dbReference type="PDB" id="4RT6">
    <property type="method" value="X-ray"/>
    <property type="resolution" value="2.80 A"/>
    <property type="chains" value="A=22-905"/>
</dbReference>
<dbReference type="PDBsum" id="4I84"/>
<dbReference type="PDBsum" id="4RM6"/>
<dbReference type="PDBsum" id="4RT6"/>
<dbReference type="SMR" id="P44602"/>
<dbReference type="STRING" id="71421.HI_0264"/>
<dbReference type="EnsemblBacteria" id="AAC21929">
    <property type="protein sequence ID" value="AAC21929"/>
    <property type="gene ID" value="HI_0264"/>
</dbReference>
<dbReference type="KEGG" id="hin:HI_0264"/>
<dbReference type="PATRIC" id="fig|71421.8.peg.279"/>
<dbReference type="eggNOG" id="COG3210">
    <property type="taxonomic scope" value="Bacteria"/>
</dbReference>
<dbReference type="HOGENOM" id="CLU_320502_0_0_6"/>
<dbReference type="OrthoDB" id="218680at2"/>
<dbReference type="BioCyc" id="HINF71421:G1GJ1-279-MONOMER"/>
<dbReference type="EvolutionaryTrace" id="P44602"/>
<dbReference type="Proteomes" id="UP000000579">
    <property type="component" value="Chromosome"/>
</dbReference>
<dbReference type="GO" id="GO:0005576">
    <property type="term" value="C:extracellular region"/>
    <property type="evidence" value="ECO:0007669"/>
    <property type="project" value="UniProtKB-SubCell"/>
</dbReference>
<dbReference type="Gene3D" id="2.160.20.10">
    <property type="entry name" value="Single-stranded right-handed beta-helix, Pectin lyase-like"/>
    <property type="match status" value="1"/>
</dbReference>
<dbReference type="InterPro" id="IPR050909">
    <property type="entry name" value="Bact_Autotransporter_VF"/>
</dbReference>
<dbReference type="InterPro" id="IPR008638">
    <property type="entry name" value="FhaB/CdiA-like_TPS"/>
</dbReference>
<dbReference type="InterPro" id="IPR012334">
    <property type="entry name" value="Pectin_lyas_fold"/>
</dbReference>
<dbReference type="InterPro" id="IPR011050">
    <property type="entry name" value="Pectin_lyase_fold/virulence"/>
</dbReference>
<dbReference type="NCBIfam" id="TIGR01901">
    <property type="entry name" value="adhes_NPXG"/>
    <property type="match status" value="1"/>
</dbReference>
<dbReference type="PANTHER" id="PTHR12338">
    <property type="entry name" value="AUTOTRANSPORTER"/>
    <property type="match status" value="1"/>
</dbReference>
<dbReference type="PANTHER" id="PTHR12338:SF8">
    <property type="entry name" value="HEME_HEMOPEXIN-BINDING PROTEIN"/>
    <property type="match status" value="1"/>
</dbReference>
<dbReference type="Pfam" id="PF05860">
    <property type="entry name" value="TPS"/>
    <property type="match status" value="1"/>
</dbReference>
<dbReference type="SMART" id="SM00912">
    <property type="entry name" value="Haemagg_act"/>
    <property type="match status" value="1"/>
</dbReference>
<dbReference type="SUPFAM" id="SSF51126">
    <property type="entry name" value="Pectin lyase-like"/>
    <property type="match status" value="1"/>
</dbReference>
<sequence length="905" mass="98833">MYKLNVISLIILTTYTGATYASARDLPQGSSVVVGEANVSTIGNKMTIDQKTPTTQIDWHSFDIGQNKEVEFKQPDANSVAYNRVTGGNASQIQGKLTANGKVYLANPNGVIITQGAEINVAGLFATTKDLERISENGNGNGNKFTRKLKDGQVVKEGQVINKGKIKAKDFVVLNGDKVINEGEIDATNNGKVYLSSGYNFTFTLSDSSISVALEDNAVQSIVQNEGIIKAGDITLNAKGRNQALDSLVMNNGVLEATKVSNKNGKVVLSADDVQLNNKSDIKGESEVVFTNEPKNKIKITSQTGSKVTSPKINFTGKSVNINGDFGRDDSKAHYNEEHKRLDTEVNIDVPDNENIRIAEKDNTGTGTGTDSFIQTGALSSLLANNGKVNLKGKDVNISGRIHIDSFRGSDSLLKLTNQGHIKINHADIHSTGRLFFITSLQNEKDSQSDITITDSKINLGNGAMGLGRSLDKENCDNQRWCRTETSQRKKFDVHMRNVVFDQVDDVVVAGGFKKVNLDNIVATGKTNFYIDGGVSRNNSRYEYGVLDLDKRTLLSELDQRRRRWKYYNDLDLDMNKAYWHRFDMFATKNTGRSTIKDTEINISNSKINLKNGFVHLLAEKIKLDNSKIDITFDKDNSQDISTQINRLGMNGKVSMVNSHIKIVGDEKSDISAKAPYATMFLIGELIGEKSSIFVKSHQGYTFRTDGDTKIAGKNSKDDLKITAINTGGRTGKEVIINGAPGSIDNDANIANMAFTIGDNANTKTTIENADITALAPNGGTAYLSSKGVEIEVNPNSNFTFFELPREKNFNQTKIKGDSTKLSERGFARLYDKINGVRASNLSAEQLNVTDASEKIINTKLVSSLDVEKLVSVAVCDAGKGCEEQQFGDKGNNTKVSVGELETEQ</sequence>
<protein>
    <recommendedName>
        <fullName>Heme/hemopexin-binding protein</fullName>
    </recommendedName>
    <alternativeName>
        <fullName>Heme:hemopexin utilization protein A</fullName>
    </alternativeName>
</protein>
<organism>
    <name type="scientific">Haemophilus influenzae (strain ATCC 51907 / DSM 11121 / KW20 / Rd)</name>
    <dbReference type="NCBI Taxonomy" id="71421"/>
    <lineage>
        <taxon>Bacteria</taxon>
        <taxon>Pseudomonadati</taxon>
        <taxon>Pseudomonadota</taxon>
        <taxon>Gammaproteobacteria</taxon>
        <taxon>Pasteurellales</taxon>
        <taxon>Pasteurellaceae</taxon>
        <taxon>Haemophilus</taxon>
    </lineage>
</organism>
<comment type="function">
    <text>Binds heme/hemopexin complexes.</text>
</comment>
<comment type="subcellular location">
    <subcellularLocation>
        <location>Secreted</location>
    </subcellularLocation>
</comment>